<dbReference type="EMBL" id="AC007966">
    <property type="protein sequence ID" value="AAY15001.1"/>
    <property type="molecule type" value="Genomic_DNA"/>
</dbReference>
<dbReference type="EMBL" id="AC008174">
    <property type="protein sequence ID" value="AAY14863.1"/>
    <property type="status" value="ALT_SEQ"/>
    <property type="molecule type" value="Genomic_DNA"/>
</dbReference>
<dbReference type="EMBL" id="BX647691">
    <property type="protein sequence ID" value="CAI46017.1"/>
    <property type="status" value="ALT_SEQ"/>
    <property type="molecule type" value="mRNA"/>
</dbReference>
<dbReference type="EMBL" id="BX648733">
    <property type="status" value="NOT_ANNOTATED_CDS"/>
    <property type="molecule type" value="mRNA"/>
</dbReference>
<dbReference type="EMBL" id="CR936597">
    <property type="protein sequence ID" value="CAI56743.1"/>
    <property type="molecule type" value="mRNA"/>
</dbReference>
<dbReference type="EMBL" id="AK126036">
    <property type="protein sequence ID" value="BAC86406.1"/>
    <property type="molecule type" value="mRNA"/>
</dbReference>
<dbReference type="EMBL" id="AK126051">
    <property type="status" value="NOT_ANNOTATED_CDS"/>
    <property type="molecule type" value="mRNA"/>
</dbReference>
<dbReference type="EMBL" id="AK126089">
    <property type="protein sequence ID" value="BAC86432.1"/>
    <property type="molecule type" value="mRNA"/>
</dbReference>
<dbReference type="CCDS" id="CCDS54426.2">
    <molecule id="Q5CZC0-1"/>
</dbReference>
<dbReference type="RefSeq" id="NP_775922.3">
    <molecule id="Q5CZC0-1"/>
    <property type="nucleotide sequence ID" value="NM_173651.4"/>
</dbReference>
<dbReference type="SMR" id="Q5CZC0"/>
<dbReference type="FunCoup" id="Q5CZC0">
    <property type="interactions" value="25"/>
</dbReference>
<dbReference type="IntAct" id="Q5CZC0">
    <property type="interactions" value="5"/>
</dbReference>
<dbReference type="STRING" id="9606.ENSP00000401306"/>
<dbReference type="GlyCosmos" id="Q5CZC0">
    <property type="glycosylation" value="6 sites, 6 glycans"/>
</dbReference>
<dbReference type="GlyGen" id="Q5CZC0">
    <property type="glycosylation" value="13 sites, 6 N-linked glycans (6 sites), 1 O-linked glycan (7 sites)"/>
</dbReference>
<dbReference type="iPTMnet" id="Q5CZC0"/>
<dbReference type="PhosphoSitePlus" id="Q5CZC0"/>
<dbReference type="BioMuta" id="FSIP2"/>
<dbReference type="DMDM" id="300669711"/>
<dbReference type="jPOST" id="Q5CZC0"/>
<dbReference type="MassIVE" id="Q5CZC0"/>
<dbReference type="PaxDb" id="9606-ENSP00000344403"/>
<dbReference type="PeptideAtlas" id="Q5CZC0"/>
<dbReference type="ProteomicsDB" id="62734">
    <molecule id="Q5CZC0-1"/>
</dbReference>
<dbReference type="ProteomicsDB" id="62735">
    <molecule id="Q5CZC0-2"/>
</dbReference>
<dbReference type="Pumba" id="Q5CZC0"/>
<dbReference type="Antibodypedia" id="51870">
    <property type="antibodies" value="34 antibodies from 10 providers"/>
</dbReference>
<dbReference type="DNASU" id="401024"/>
<dbReference type="Ensembl" id="ENST00000424728.6">
    <molecule id="Q5CZC0-1"/>
    <property type="protein sequence ID" value="ENSP00000401306.1"/>
    <property type="gene ID" value="ENSG00000188738.16"/>
</dbReference>
<dbReference type="GeneID" id="401024"/>
<dbReference type="KEGG" id="hsa:401024"/>
<dbReference type="MANE-Select" id="ENST00000424728.6">
    <property type="protein sequence ID" value="ENSP00000401306.1"/>
    <property type="RefSeq nucleotide sequence ID" value="NM_173651.4"/>
    <property type="RefSeq protein sequence ID" value="NP_775922.3"/>
</dbReference>
<dbReference type="UCSC" id="uc061qle.1">
    <molecule id="Q5CZC0-1"/>
    <property type="organism name" value="human"/>
</dbReference>
<dbReference type="AGR" id="HGNC:21675"/>
<dbReference type="CTD" id="401024"/>
<dbReference type="DisGeNET" id="401024"/>
<dbReference type="GeneCards" id="FSIP2"/>
<dbReference type="HGNC" id="HGNC:21675">
    <property type="gene designation" value="FSIP2"/>
</dbReference>
<dbReference type="HPA" id="ENSG00000188738">
    <property type="expression patterns" value="Group enriched (intestine, stomach, testis)"/>
</dbReference>
<dbReference type="MalaCards" id="FSIP2"/>
<dbReference type="MIM" id="615796">
    <property type="type" value="gene"/>
</dbReference>
<dbReference type="MIM" id="618153">
    <property type="type" value="phenotype"/>
</dbReference>
<dbReference type="neXtProt" id="NX_Q5CZC0"/>
<dbReference type="OpenTargets" id="ENSG00000188738"/>
<dbReference type="Orphanet" id="276234">
    <property type="disease" value="Non-syndromic male infertility due to sperm motility disorder"/>
</dbReference>
<dbReference type="VEuPathDB" id="HostDB:ENSG00000188738"/>
<dbReference type="eggNOG" id="ENOG502S41A">
    <property type="taxonomic scope" value="Eukaryota"/>
</dbReference>
<dbReference type="GeneTree" id="ENSGT00680000100018"/>
<dbReference type="HOGENOM" id="CLU_000048_0_0_1"/>
<dbReference type="InParanoid" id="Q5CZC0"/>
<dbReference type="OMA" id="RKTECFS"/>
<dbReference type="OrthoDB" id="8197715at2759"/>
<dbReference type="PAN-GO" id="Q5CZC0">
    <property type="GO annotations" value="0 GO annotations based on evolutionary models"/>
</dbReference>
<dbReference type="PhylomeDB" id="Q5CZC0"/>
<dbReference type="PathwayCommons" id="Q5CZC0"/>
<dbReference type="SignaLink" id="Q5CZC0"/>
<dbReference type="BioGRID-ORCS" id="401024">
    <property type="hits" value="14 hits in 1119 CRISPR screens"/>
</dbReference>
<dbReference type="ChiTaRS" id="FSIP2">
    <property type="organism name" value="human"/>
</dbReference>
<dbReference type="GenomeRNAi" id="401024"/>
<dbReference type="Pharos" id="Q5CZC0">
    <property type="development level" value="Tdark"/>
</dbReference>
<dbReference type="PRO" id="PR:Q5CZC0"/>
<dbReference type="Proteomes" id="UP000005640">
    <property type="component" value="Chromosome 2"/>
</dbReference>
<dbReference type="RNAct" id="Q5CZC0">
    <property type="molecule type" value="protein"/>
</dbReference>
<dbReference type="Bgee" id="ENSG00000188738">
    <property type="expression patterns" value="Expressed in sperm and 102 other cell types or tissues"/>
</dbReference>
<dbReference type="ExpressionAtlas" id="Q5CZC0">
    <property type="expression patterns" value="baseline and differential"/>
</dbReference>
<dbReference type="GO" id="GO:0097229">
    <property type="term" value="C:sperm end piece"/>
    <property type="evidence" value="ECO:0000314"/>
    <property type="project" value="UniProtKB"/>
</dbReference>
<dbReference type="GO" id="GO:0120212">
    <property type="term" value="C:sperm head-tail coupling apparatus"/>
    <property type="evidence" value="ECO:0000314"/>
    <property type="project" value="UniProtKB"/>
</dbReference>
<dbReference type="GO" id="GO:0097225">
    <property type="term" value="C:sperm midpiece"/>
    <property type="evidence" value="ECO:0000314"/>
    <property type="project" value="UniProtKB"/>
</dbReference>
<dbReference type="GO" id="GO:0097228">
    <property type="term" value="C:sperm principal piece"/>
    <property type="evidence" value="ECO:0000315"/>
    <property type="project" value="UniProtKB"/>
</dbReference>
<dbReference type="GO" id="GO:0030317">
    <property type="term" value="P:flagellated sperm motility"/>
    <property type="evidence" value="ECO:0000315"/>
    <property type="project" value="UniProtKB"/>
</dbReference>
<dbReference type="GO" id="GO:0061512">
    <property type="term" value="P:protein localization to cilium"/>
    <property type="evidence" value="ECO:0000315"/>
    <property type="project" value="UniProtKB"/>
</dbReference>
<dbReference type="GO" id="GO:0007288">
    <property type="term" value="P:sperm axoneme assembly"/>
    <property type="evidence" value="ECO:0000315"/>
    <property type="project" value="UniProtKB"/>
</dbReference>
<dbReference type="InterPro" id="IPR038891">
    <property type="entry name" value="FSIP2"/>
</dbReference>
<dbReference type="InterPro" id="IPR031554">
    <property type="entry name" value="FSIP2_C"/>
</dbReference>
<dbReference type="PANTHER" id="PTHR47315">
    <property type="entry name" value="FIBROUS SHEATH INTERACTING PROTEIN 2"/>
    <property type="match status" value="1"/>
</dbReference>
<dbReference type="PANTHER" id="PTHR47315:SF3">
    <property type="entry name" value="FIBROUS SHEATH-INTERACTING PROTEIN 2-LIKE"/>
    <property type="match status" value="1"/>
</dbReference>
<dbReference type="Pfam" id="PF15783">
    <property type="entry name" value="FSIP2"/>
    <property type="match status" value="4"/>
</dbReference>
<comment type="function">
    <text evidence="8">Plays a role in spermatogenesis.</text>
</comment>
<comment type="subunit">
    <text evidence="1">May interact with AKAP4.</text>
</comment>
<comment type="alternative products">
    <event type="alternative splicing"/>
    <isoform>
        <id>Q5CZC0-1</id>
        <name>1</name>
        <sequence type="displayed"/>
    </isoform>
    <isoform>
        <id>Q5CZC0-2</id>
        <name>2</name>
        <sequence type="described" ref="VSP_039412 VSP_039413"/>
    </isoform>
</comment>
<comment type="tissue specificity">
    <text evidence="5">Predominantly expressed in testis.</text>
</comment>
<comment type="disease" evidence="5">
    <disease id="DI-05351">
        <name>Spermatogenic failure 34</name>
        <acronym>SPGF34</acronym>
        <description>An autosomal recessive infertility disorder caused by spermatogenesis defects that result in multiple abnormalities of sperm flagellum, including irregular-caliber, short, coiled, or absent flagella.</description>
        <dbReference type="MIM" id="618153"/>
    </disease>
    <text>The disease may be caused by variants affecting the gene represented in this entry.</text>
</comment>
<comment type="sequence caution" evidence="7">
    <conflict type="erroneous gene model prediction">
        <sequence resource="EMBL-CDS" id="AAY14863"/>
    </conflict>
</comment>
<comment type="sequence caution" evidence="7">
    <conflict type="frameshift">
        <sequence resource="EMBL" id="AK126051"/>
    </conflict>
</comment>
<comment type="sequence caution" evidence="7">
    <conflict type="frameshift">
        <sequence resource="EMBL-CDS" id="CAI46017"/>
    </conflict>
</comment>
<comment type="sequence caution" evidence="7">
    <conflict type="miscellaneous discrepancy">
        <sequence resource="EMBL-CDS" id="CAI46017"/>
    </conflict>
    <text>Aberrant splicing.</text>
</comment>
<proteinExistence type="evidence at protein level"/>
<protein>
    <recommendedName>
        <fullName>Fibrous sheath-interacting protein 2</fullName>
    </recommendedName>
</protein>
<reference key="1">
    <citation type="journal article" date="2005" name="Nature">
        <title>Generation and annotation of the DNA sequences of human chromosomes 2 and 4.</title>
        <authorList>
            <person name="Hillier L.W."/>
            <person name="Graves T.A."/>
            <person name="Fulton R.S."/>
            <person name="Fulton L.A."/>
            <person name="Pepin K.H."/>
            <person name="Minx P."/>
            <person name="Wagner-McPherson C."/>
            <person name="Layman D."/>
            <person name="Wylie K."/>
            <person name="Sekhon M."/>
            <person name="Becker M.C."/>
            <person name="Fewell G.A."/>
            <person name="Delehaunty K.D."/>
            <person name="Miner T.L."/>
            <person name="Nash W.E."/>
            <person name="Kremitzki C."/>
            <person name="Oddy L."/>
            <person name="Du H."/>
            <person name="Sun H."/>
            <person name="Bradshaw-Cordum H."/>
            <person name="Ali J."/>
            <person name="Carter J."/>
            <person name="Cordes M."/>
            <person name="Harris A."/>
            <person name="Isak A."/>
            <person name="van Brunt A."/>
            <person name="Nguyen C."/>
            <person name="Du F."/>
            <person name="Courtney L."/>
            <person name="Kalicki J."/>
            <person name="Ozersky P."/>
            <person name="Abbott S."/>
            <person name="Armstrong J."/>
            <person name="Belter E.A."/>
            <person name="Caruso L."/>
            <person name="Cedroni M."/>
            <person name="Cotton M."/>
            <person name="Davidson T."/>
            <person name="Desai A."/>
            <person name="Elliott G."/>
            <person name="Erb T."/>
            <person name="Fronick C."/>
            <person name="Gaige T."/>
            <person name="Haakenson W."/>
            <person name="Haglund K."/>
            <person name="Holmes A."/>
            <person name="Harkins R."/>
            <person name="Kim K."/>
            <person name="Kruchowski S.S."/>
            <person name="Strong C.M."/>
            <person name="Grewal N."/>
            <person name="Goyea E."/>
            <person name="Hou S."/>
            <person name="Levy A."/>
            <person name="Martinka S."/>
            <person name="Mead K."/>
            <person name="McLellan M.D."/>
            <person name="Meyer R."/>
            <person name="Randall-Maher J."/>
            <person name="Tomlinson C."/>
            <person name="Dauphin-Kohlberg S."/>
            <person name="Kozlowicz-Reilly A."/>
            <person name="Shah N."/>
            <person name="Swearengen-Shahid S."/>
            <person name="Snider J."/>
            <person name="Strong J.T."/>
            <person name="Thompson J."/>
            <person name="Yoakum M."/>
            <person name="Leonard S."/>
            <person name="Pearman C."/>
            <person name="Trani L."/>
            <person name="Radionenko M."/>
            <person name="Waligorski J.E."/>
            <person name="Wang C."/>
            <person name="Rock S.M."/>
            <person name="Tin-Wollam A.-M."/>
            <person name="Maupin R."/>
            <person name="Latreille P."/>
            <person name="Wendl M.C."/>
            <person name="Yang S.-P."/>
            <person name="Pohl C."/>
            <person name="Wallis J.W."/>
            <person name="Spieth J."/>
            <person name="Bieri T.A."/>
            <person name="Berkowicz N."/>
            <person name="Nelson J.O."/>
            <person name="Osborne J."/>
            <person name="Ding L."/>
            <person name="Meyer R."/>
            <person name="Sabo A."/>
            <person name="Shotland Y."/>
            <person name="Sinha P."/>
            <person name="Wohldmann P.E."/>
            <person name="Cook L.L."/>
            <person name="Hickenbotham M.T."/>
            <person name="Eldred J."/>
            <person name="Williams D."/>
            <person name="Jones T.A."/>
            <person name="She X."/>
            <person name="Ciccarelli F.D."/>
            <person name="Izaurralde E."/>
            <person name="Taylor J."/>
            <person name="Schmutz J."/>
            <person name="Myers R.M."/>
            <person name="Cox D.R."/>
            <person name="Huang X."/>
            <person name="McPherson J.D."/>
            <person name="Mardis E.R."/>
            <person name="Clifton S.W."/>
            <person name="Warren W.C."/>
            <person name="Chinwalla A.T."/>
            <person name="Eddy S.R."/>
            <person name="Marra M.A."/>
            <person name="Ovcharenko I."/>
            <person name="Furey T.S."/>
            <person name="Miller W."/>
            <person name="Eichler E.E."/>
            <person name="Bork P."/>
            <person name="Suyama M."/>
            <person name="Torrents D."/>
            <person name="Waterston R.H."/>
            <person name="Wilson R.K."/>
        </authorList>
    </citation>
    <scope>NUCLEOTIDE SEQUENCE [LARGE SCALE GENOMIC DNA]</scope>
</reference>
<reference key="2">
    <citation type="journal article" date="2007" name="BMC Genomics">
        <title>The full-ORF clone resource of the German cDNA consortium.</title>
        <authorList>
            <person name="Bechtel S."/>
            <person name="Rosenfelder H."/>
            <person name="Duda A."/>
            <person name="Schmidt C.P."/>
            <person name="Ernst U."/>
            <person name="Wellenreuther R."/>
            <person name="Mehrle A."/>
            <person name="Schuster C."/>
            <person name="Bahr A."/>
            <person name="Bloecker H."/>
            <person name="Heubner D."/>
            <person name="Hoerlein A."/>
            <person name="Michel G."/>
            <person name="Wedler H."/>
            <person name="Koehrer K."/>
            <person name="Ottenwaelder B."/>
            <person name="Poustka A."/>
            <person name="Wiemann S."/>
            <person name="Schupp I."/>
        </authorList>
    </citation>
    <scope>NUCLEOTIDE SEQUENCE [LARGE SCALE MRNA] OF 216-1736 AND 5244-6907 (ISOFORM 1)</scope>
    <source>
        <tissue>Colon carcinoma</tissue>
        <tissue>Fetal kidney</tissue>
        <tissue>Testis</tissue>
    </source>
</reference>
<reference key="3">
    <citation type="journal article" date="2004" name="Nat. Genet.">
        <title>Complete sequencing and characterization of 21,243 full-length human cDNAs.</title>
        <authorList>
            <person name="Ota T."/>
            <person name="Suzuki Y."/>
            <person name="Nishikawa T."/>
            <person name="Otsuki T."/>
            <person name="Sugiyama T."/>
            <person name="Irie R."/>
            <person name="Wakamatsu A."/>
            <person name="Hayashi K."/>
            <person name="Sato H."/>
            <person name="Nagai K."/>
            <person name="Kimura K."/>
            <person name="Makita H."/>
            <person name="Sekine M."/>
            <person name="Obayashi M."/>
            <person name="Nishi T."/>
            <person name="Shibahara T."/>
            <person name="Tanaka T."/>
            <person name="Ishii S."/>
            <person name="Yamamoto J."/>
            <person name="Saito K."/>
            <person name="Kawai Y."/>
            <person name="Isono Y."/>
            <person name="Nakamura Y."/>
            <person name="Nagahari K."/>
            <person name="Murakami K."/>
            <person name="Yasuda T."/>
            <person name="Iwayanagi T."/>
            <person name="Wagatsuma M."/>
            <person name="Shiratori A."/>
            <person name="Sudo H."/>
            <person name="Hosoiri T."/>
            <person name="Kaku Y."/>
            <person name="Kodaira H."/>
            <person name="Kondo H."/>
            <person name="Sugawara M."/>
            <person name="Takahashi M."/>
            <person name="Kanda K."/>
            <person name="Yokoi T."/>
            <person name="Furuya T."/>
            <person name="Kikkawa E."/>
            <person name="Omura Y."/>
            <person name="Abe K."/>
            <person name="Kamihara K."/>
            <person name="Katsuta N."/>
            <person name="Sato K."/>
            <person name="Tanikawa M."/>
            <person name="Yamazaki M."/>
            <person name="Ninomiya K."/>
            <person name="Ishibashi T."/>
            <person name="Yamashita H."/>
            <person name="Murakawa K."/>
            <person name="Fujimori K."/>
            <person name="Tanai H."/>
            <person name="Kimata M."/>
            <person name="Watanabe M."/>
            <person name="Hiraoka S."/>
            <person name="Chiba Y."/>
            <person name="Ishida S."/>
            <person name="Ono Y."/>
            <person name="Takiguchi S."/>
            <person name="Watanabe S."/>
            <person name="Yosida M."/>
            <person name="Hotuta T."/>
            <person name="Kusano J."/>
            <person name="Kanehori K."/>
            <person name="Takahashi-Fujii A."/>
            <person name="Hara H."/>
            <person name="Tanase T.-O."/>
            <person name="Nomura Y."/>
            <person name="Togiya S."/>
            <person name="Komai F."/>
            <person name="Hara R."/>
            <person name="Takeuchi K."/>
            <person name="Arita M."/>
            <person name="Imose N."/>
            <person name="Musashino K."/>
            <person name="Yuuki H."/>
            <person name="Oshima A."/>
            <person name="Sasaki N."/>
            <person name="Aotsuka S."/>
            <person name="Yoshikawa Y."/>
            <person name="Matsunawa H."/>
            <person name="Ichihara T."/>
            <person name="Shiohata N."/>
            <person name="Sano S."/>
            <person name="Moriya S."/>
            <person name="Momiyama H."/>
            <person name="Satoh N."/>
            <person name="Takami S."/>
            <person name="Terashima Y."/>
            <person name="Suzuki O."/>
            <person name="Nakagawa S."/>
            <person name="Senoh A."/>
            <person name="Mizoguchi H."/>
            <person name="Goto Y."/>
            <person name="Shimizu F."/>
            <person name="Wakebe H."/>
            <person name="Hishigaki H."/>
            <person name="Watanabe T."/>
            <person name="Sugiyama A."/>
            <person name="Takemoto M."/>
            <person name="Kawakami B."/>
            <person name="Yamazaki M."/>
            <person name="Watanabe K."/>
            <person name="Kumagai A."/>
            <person name="Itakura S."/>
            <person name="Fukuzumi Y."/>
            <person name="Fujimori Y."/>
            <person name="Komiyama M."/>
            <person name="Tashiro H."/>
            <person name="Tanigami A."/>
            <person name="Fujiwara T."/>
            <person name="Ono T."/>
            <person name="Yamada K."/>
            <person name="Fujii Y."/>
            <person name="Ozaki K."/>
            <person name="Hirao M."/>
            <person name="Ohmori Y."/>
            <person name="Kawabata A."/>
            <person name="Hikiji T."/>
            <person name="Kobatake N."/>
            <person name="Inagaki H."/>
            <person name="Ikema Y."/>
            <person name="Okamoto S."/>
            <person name="Okitani R."/>
            <person name="Kawakami T."/>
            <person name="Noguchi S."/>
            <person name="Itoh T."/>
            <person name="Shigeta K."/>
            <person name="Senba T."/>
            <person name="Matsumura K."/>
            <person name="Nakajima Y."/>
            <person name="Mizuno T."/>
            <person name="Morinaga M."/>
            <person name="Sasaki M."/>
            <person name="Togashi T."/>
            <person name="Oyama M."/>
            <person name="Hata H."/>
            <person name="Watanabe M."/>
            <person name="Komatsu T."/>
            <person name="Mizushima-Sugano J."/>
            <person name="Satoh T."/>
            <person name="Shirai Y."/>
            <person name="Takahashi Y."/>
            <person name="Nakagawa K."/>
            <person name="Okumura K."/>
            <person name="Nagase T."/>
            <person name="Nomura N."/>
            <person name="Kikuchi H."/>
            <person name="Masuho Y."/>
            <person name="Yamashita R."/>
            <person name="Nakai K."/>
            <person name="Yada T."/>
            <person name="Nakamura Y."/>
            <person name="Ohara O."/>
            <person name="Isogai T."/>
            <person name="Sugano S."/>
        </authorList>
    </citation>
    <scope>NUCLEOTIDE SEQUENCE [LARGE SCALE MRNA] OF 5499-6907 (ISOFORM 1)</scope>
    <scope>NUCLEOTIDE SEQUENCE [LARGE SCALE MRNA] OF 2495-6907 (ISOFORM 2)</scope>
    <source>
        <tissue>Testis</tissue>
    </source>
</reference>
<reference key="4">
    <citation type="journal article" date="2015" name="Am. J. Hum. Genet.">
        <title>Joubert Syndrome in French Canadians and Identification of Mutations in CEP104.</title>
        <authorList>
            <consortium name="Care4Rare Canada Consortium"/>
            <person name="Srour M."/>
            <person name="Hamdan F.F."/>
            <person name="McKnight D."/>
            <person name="Davis E."/>
            <person name="Mandel H."/>
            <person name="Schwartzentruber J."/>
            <person name="Martin B."/>
            <person name="Patry L."/>
            <person name="Nassif C."/>
            <person name="Dionne-Laporte A."/>
            <person name="Ospina L.H."/>
            <person name="Lemyre E."/>
            <person name="Massicotte C."/>
            <person name="Laframboise R."/>
            <person name="Maranda B."/>
            <person name="Labuda D."/>
            <person name="Decarie J.C."/>
            <person name="Rypens F."/>
            <person name="Goldsher D."/>
            <person name="Fallet-Bianco C."/>
            <person name="Soucy J.F."/>
            <person name="Laberge A.M."/>
            <person name="Maftei C."/>
            <person name="Boycott K."/>
            <person name="Brais B."/>
            <person name="Boucher R.M."/>
            <person name="Rouleau G.A."/>
            <person name="Katsanis N."/>
            <person name="Majewski J."/>
            <person name="Elpeleg O."/>
            <person name="Kukolich M.K."/>
            <person name="Shalev S."/>
            <person name="Michaud J.L."/>
        </authorList>
    </citation>
    <scope>VARIANTS PHE-700 AND THR-2764</scope>
</reference>
<reference key="5">
    <citation type="journal article" date="2018" name="Hum. Reprod.">
        <title>Whole-exome sequencing identifies mutations in FSIP2 as a recurrent cause of multiple morphological abnormalities of the sperm flagella.</title>
        <authorList>
            <person name="Martinez G."/>
            <person name="Kherraf Z.E."/>
            <person name="Zouari R."/>
            <person name="Fourati Ben Mustapha S."/>
            <person name="Saut A."/>
            <person name="Pernet-Gallay K."/>
            <person name="Bertrand A."/>
            <person name="Bidart M."/>
            <person name="Hograindleur J.P."/>
            <person name="Amiri-Yekta A."/>
            <person name="Kharouf M."/>
            <person name="Karaouzene T."/>
            <person name="Thierry-Mieg N."/>
            <person name="Dacheux-Deschamps D."/>
            <person name="Satre V."/>
            <person name="Bonhivers M."/>
            <person name="Toure A."/>
            <person name="Arnoult C."/>
            <person name="Ray P.F."/>
            <person name="Coutton C."/>
        </authorList>
    </citation>
    <scope>INVOLVEMENT IN SPGF34</scope>
    <scope>FUNCTION</scope>
    <scope>TISSUE SPECIFICITY</scope>
</reference>
<accession>Q5CZC0</accession>
<accession>Q53TL3</accession>
<accession>Q53TN5</accession>
<accession>Q5HYH2</accession>
<accession>Q6ZTZ5</accession>
<accession>Q6ZU14</accession>
<accession>Q6ZU21</accession>
<evidence type="ECO:0000250" key="1">
    <source>
        <dbReference type="UniProtKB" id="A2ARZ3"/>
    </source>
</evidence>
<evidence type="ECO:0000255" key="2"/>
<evidence type="ECO:0000256" key="3">
    <source>
        <dbReference type="SAM" id="MobiDB-lite"/>
    </source>
</evidence>
<evidence type="ECO:0000269" key="4">
    <source>
    </source>
</evidence>
<evidence type="ECO:0000269" key="5">
    <source>
    </source>
</evidence>
<evidence type="ECO:0000303" key="6">
    <source>
    </source>
</evidence>
<evidence type="ECO:0000305" key="7"/>
<evidence type="ECO:0000305" key="8">
    <source>
    </source>
</evidence>
<keyword id="KW-0025">Alternative splicing</keyword>
<keyword id="KW-0175">Coiled coil</keyword>
<keyword id="KW-0597">Phosphoprotein</keyword>
<keyword id="KW-1267">Proteomics identification</keyword>
<keyword id="KW-1185">Reference proteome</keyword>
<keyword id="KW-0677">Repeat</keyword>
<feature type="chain" id="PRO_0000331750" description="Fibrous sheath-interacting protein 2">
    <location>
        <begin position="1"/>
        <end position="6907"/>
    </location>
</feature>
<feature type="region of interest" description="Disordered" evidence="3">
    <location>
        <begin position="273"/>
        <end position="292"/>
    </location>
</feature>
<feature type="region of interest" description="Disordered" evidence="3">
    <location>
        <begin position="439"/>
        <end position="472"/>
    </location>
</feature>
<feature type="region of interest" description="Disordered" evidence="3">
    <location>
        <begin position="954"/>
        <end position="990"/>
    </location>
</feature>
<feature type="region of interest" description="Disordered" evidence="3">
    <location>
        <begin position="1545"/>
        <end position="1573"/>
    </location>
</feature>
<feature type="region of interest" description="Disordered" evidence="3">
    <location>
        <begin position="3202"/>
        <end position="3257"/>
    </location>
</feature>
<feature type="region of interest" description="Disordered" evidence="3">
    <location>
        <begin position="5650"/>
        <end position="5672"/>
    </location>
</feature>
<feature type="region of interest" description="Disordered" evidence="3">
    <location>
        <begin position="5725"/>
        <end position="5781"/>
    </location>
</feature>
<feature type="region of interest" description="Disordered" evidence="3">
    <location>
        <begin position="5850"/>
        <end position="5880"/>
    </location>
</feature>
<feature type="region of interest" description="Disordered" evidence="3">
    <location>
        <begin position="6852"/>
        <end position="6874"/>
    </location>
</feature>
<feature type="coiled-coil region" evidence="2">
    <location>
        <begin position="5738"/>
        <end position="5766"/>
    </location>
</feature>
<feature type="compositionally biased region" description="Basic and acidic residues" evidence="3">
    <location>
        <begin position="445"/>
        <end position="460"/>
    </location>
</feature>
<feature type="compositionally biased region" description="Polar residues" evidence="3">
    <location>
        <begin position="954"/>
        <end position="966"/>
    </location>
</feature>
<feature type="compositionally biased region" description="Basic and acidic residues" evidence="3">
    <location>
        <begin position="1545"/>
        <end position="1555"/>
    </location>
</feature>
<feature type="compositionally biased region" description="Basic and acidic residues" evidence="3">
    <location>
        <begin position="3213"/>
        <end position="3229"/>
    </location>
</feature>
<feature type="compositionally biased region" description="Low complexity" evidence="3">
    <location>
        <begin position="5728"/>
        <end position="5741"/>
    </location>
</feature>
<feature type="compositionally biased region" description="Basic and acidic residues" evidence="3">
    <location>
        <begin position="5743"/>
        <end position="5778"/>
    </location>
</feature>
<feature type="modified residue" description="Phosphoserine" evidence="1">
    <location>
        <position position="430"/>
    </location>
</feature>
<feature type="splice variant" id="VSP_039412" description="In isoform 2." evidence="6">
    <original>VFS</original>
    <variation>GRC</variation>
    <location>
        <begin position="3464"/>
        <end position="3466"/>
    </location>
</feature>
<feature type="splice variant" id="VSP_039413" description="In isoform 2." evidence="6">
    <location>
        <begin position="3467"/>
        <end position="6907"/>
    </location>
</feature>
<feature type="sequence variant" id="VAR_042938" description="In dbSNP:rs9808218.">
    <original>M</original>
    <variation>V</variation>
    <location>
        <position position="306"/>
    </location>
</feature>
<feature type="sequence variant" id="VAR_075707" evidence="4">
    <original>L</original>
    <variation>F</variation>
    <location>
        <position position="700"/>
    </location>
</feature>
<feature type="sequence variant" id="VAR_075708" description="In dbSNP:rs201794247." evidence="4">
    <original>P</original>
    <variation>T</variation>
    <location>
        <position position="2764"/>
    </location>
</feature>
<feature type="sequence conflict" description="In Ref. 2; CAI56743." evidence="7" ref="2">
    <original>T</original>
    <variation>A</variation>
    <location>
        <position position="241"/>
    </location>
</feature>
<feature type="sequence conflict" description="In Ref. 2; CAI56743." evidence="7" ref="2">
    <original>K</original>
    <variation>R</variation>
    <location>
        <position position="336"/>
    </location>
</feature>
<feature type="sequence conflict" description="In Ref. 2; CAI56743." evidence="7" ref="2">
    <original>S</original>
    <variation>P</variation>
    <location>
        <position position="430"/>
    </location>
</feature>
<feature type="sequence conflict" description="In Ref. 2; CAI56743." evidence="7" ref="2">
    <original>R</original>
    <variation>Q</variation>
    <location>
        <position position="1288"/>
    </location>
</feature>
<feature type="sequence conflict" description="In Ref. 3; BAC86432." evidence="7" ref="3">
    <original>R</original>
    <variation>M</variation>
    <location>
        <position position="2499"/>
    </location>
</feature>
<feature type="sequence conflict" description="In Ref. 3; BAC86432." evidence="7" ref="3">
    <original>T</original>
    <variation>I</variation>
    <location>
        <position position="2808"/>
    </location>
</feature>
<feature type="sequence conflict" description="In Ref. 3; BAC86432." evidence="7" ref="3">
    <original>F</original>
    <variation>L</variation>
    <location>
        <position position="2895"/>
    </location>
</feature>
<feature type="sequence conflict" description="In Ref. 3; BAC86432." evidence="7" ref="3">
    <original>K</original>
    <variation>E</variation>
    <location>
        <position position="2900"/>
    </location>
</feature>
<feature type="sequence conflict" description="In Ref. 2; BX648733." evidence="7" ref="2">
    <original>E</original>
    <variation>D</variation>
    <location>
        <position position="5357"/>
    </location>
</feature>
<feature type="sequence conflict" description="In Ref. 3; AK126051." evidence="7" ref="3">
    <original>N</original>
    <variation>D</variation>
    <location>
        <position position="5523"/>
    </location>
</feature>
<feature type="sequence conflict" description="In Ref. 2; BX648733." evidence="7" ref="2">
    <original>I</original>
    <variation>V</variation>
    <location>
        <position position="5564"/>
    </location>
</feature>
<feature type="sequence conflict" description="In Ref. 3; AK126051." evidence="7" ref="3">
    <original>Y</original>
    <variation>N</variation>
    <location>
        <position position="5583"/>
    </location>
</feature>
<feature type="sequence conflict" description="In Ref. 2; BX648733 and 3; AK126051." evidence="7" ref="2 3">
    <original>I</original>
    <variation>T</variation>
    <location>
        <position position="5649"/>
    </location>
</feature>
<feature type="sequence conflict" description="In Ref. 3; AK126051." evidence="7" ref="3">
    <original>R</original>
    <variation>Q</variation>
    <location>
        <position position="5775"/>
    </location>
</feature>
<feature type="sequence conflict" description="In Ref. 2; CAI46017." evidence="7" ref="2">
    <original>L</original>
    <variation>P</variation>
    <location>
        <position position="5824"/>
    </location>
</feature>
<feature type="sequence conflict" description="In Ref. 3; AK126051/BAC86406." evidence="7" ref="3">
    <original>R</original>
    <variation>H</variation>
    <location>
        <position position="5960"/>
    </location>
</feature>
<feature type="sequence conflict" description="In Ref. 3; AK126051/BAC86406." evidence="7" ref="3">
    <original>L</original>
    <variation>Q</variation>
    <location>
        <position position="6165"/>
    </location>
</feature>
<feature type="sequence conflict" description="In Ref. 2; CAI46017." evidence="7" ref="2">
    <original>G</original>
    <variation>E</variation>
    <location>
        <position position="6526"/>
    </location>
</feature>
<feature type="sequence conflict" description="In Ref. 2; BX648733." evidence="7" ref="2">
    <original>T</original>
    <variation>I</variation>
    <location>
        <position position="6591"/>
    </location>
</feature>
<feature type="sequence conflict" description="In Ref. 2; CAI46017." evidence="7" ref="2">
    <original>P</original>
    <variation>S</variation>
    <location>
        <position position="6622"/>
    </location>
</feature>
<feature type="sequence conflict" description="In Ref. 3; BAC86406." evidence="7" ref="3">
    <original>V</original>
    <variation>E</variation>
    <location>
        <position position="6644"/>
    </location>
</feature>
<feature type="sequence conflict" description="In Ref. 2; BX648733." evidence="7" ref="2">
    <original>T</original>
    <variation>I</variation>
    <location>
        <position position="6730"/>
    </location>
</feature>
<feature type="sequence conflict" description="In Ref. 2; CAI46017." evidence="7" ref="2">
    <original>Q</original>
    <variation>R</variation>
    <location>
        <position position="6736"/>
    </location>
</feature>
<feature type="sequence conflict" description="In Ref. 2; BX648733." evidence="7" ref="2">
    <original>M</original>
    <variation>V</variation>
    <location>
        <position position="6760"/>
    </location>
</feature>
<feature type="sequence conflict" description="In Ref. 2; BX648733." evidence="7" ref="2">
    <original>M</original>
    <variation>V</variation>
    <location>
        <position position="6794"/>
    </location>
</feature>
<feature type="sequence conflict" description="In Ref. 2; BX648733/CAI46017 and 3; AK126051/BAC86406." evidence="7" ref="2 3">
    <original>T</original>
    <variation>A</variation>
    <location>
        <position position="6883"/>
    </location>
</feature>
<sequence length="6907" mass="780607">MELYLGACSKPAKVAVTKTVASVLAADTQQCRDGVHKTHFAGVGPAQLLDLPLGVKLPVIPGSNAVFYTTNFGEKLFRPSYGFNLTDPYCRLLENQYKSLHDPHLKAYYKRKDILKRLKKGGYITSNNKVVCTLRELNKYRQYLTSLKLDFERNYIKEQRILAKQLHNIPENNQIPQHCDVAQVQNWLLKEGTESIKDQERLMRHRYLDMISRKLEQLERTAEEQRLFLMDREERRQREHTRRKLTLRRKIEEEWKTKEMLLLTRMAEDVKREERIEEQQHRNREESDRKKQDLLEKKMAYHLQKMQDTGFNGEDIGKNTFKYRGQDGTHASPKNKKKTSEDIMLVYPAGDQNTYKETHGHTANAAHQRQNSSNNFTKKNSASVVYQADVQDNGINQKRDGMVSKNSSIFDDRGGINISGQGSIISAQVSPTRNFSRVSQAFLDPSKEEKETNADWDGRPTKRSSYLCESGPQAHATDPGIFSSPVYTNMQQNLLQNCLQEKVTSEELNIIIQNVMTWVVATVTSILYPAITKYEKRLQNNTYPVSDDSILSSDSSSFCSTCSEDFTYRSYTSATTKTFQAEPCAFVVDTSVRRPTTPIKPPPAHVEKTVVGKTCHIKGQSIISKHKYNKTNLLYSYPKLRSCKSDSHLLASFETGTKKSKDATTETDSLGSSLHCDKTAKAMDEMKNLKNVFVNFKCYLKGETEVILESILREIMSDLTQAIPSLSSVTAEVFVEQCEREKEILLSNAHIPSVASEIVENMLEKLESAVEKKCVEMFSQDLSVDIKPSLAASDELLTSSNGKPLKNSMPHTLDPMCDIAEDMVHAILEKLMTLVSFKQNEFLHLKDTNKLSCQQHKTDPICMFLQRAGKNKSSLESDEASLIVNEEVQNLISNIFSQSSLVAYIEEAINAILGYIQTELNNERIIASEETVVLLQLLEDILFQLHQEPVNESFQKSRQPRISSPSDTKEKYRLTGTRLSNSPRSGRPFPPINVPGMVLYSDDENEEIDNIVKNVLDSTFKDEKVKSQEQIPNHWFTKGNTCFECKRNIKPPTKPGSRSKAAFHDWELKTEPPSTNHEDILKKKLSSNKDISTFSQDQKHQIEKASENIVTSILKEMLKDISSVPFGHLDSKTGSEASVLVSEKPQGLSHQEWIDQMFSVSEISTVAQEITDSVLNILHKASNYISNTTKSSISSSVHQISLHNSDTEHIVKEAPNKYPLKTWFDSEKKMKYLSLFDVDPEKPPWLKSGKSEPKPVDDINDKIIRTIFKRLKSFICPKLHMGFKSSLRSQLSKYTAKIVNIVLCAIQNELELHKENLNLREIDHTKSLTDKGFFANTDKKLESLVTSIDDDILASPLLTCIYDMLLSSENAHQRSISLSSRKPKSATDSVDVQSILPNRQDKKSFHKYLATPCTHHSVNGGNHIKENAKLQVLERIGETLHEMLSKLLGTHLHSQLSCSQQSREMTNKNQKMAAALQSNIQLISKAILDYILAKLCGVDMDTSFASCGLKAISESLDIDNPSFASIIEKMAKSTKIISSIVSRRVQEDNKEETKSKAKPVAPVSSKTPSTKEMHPNKLKAVASDILNMVFAKLEGFANGHLEILGAINDGNKKSNKIGWEYESTNISRDTHEASFLSALYMHAKKVSSAILKVIQTELNVTSSDLKTSVENPPPETQILKYVVKLILDAVSSDMFNEMESEGGGIETYRYRPTYGSLPGGAESDSFLEDDAYTAKKIIDERSPQREEVKTRSLKQWALEKTLNKIEVKLKEPHISPIAPIIRNILNEIFQSTLINQLNVLSLSHSNFNGMPHNVDEPTPQTSVQFMDKMMDPLLSEADITIVTDNIVRTVFHKLYSAAMTERNVRENRYKTITFSANVSSHEHTYKGKSSVTALDENPCTFQSRFSVADKETKVNLAEDIVQAILTNLETFATSKVKSLFYSQVNFTVPVALPIQQDHSTLSKALSAKDSYSDEQFSCCSVDHTKSGKTNLCQLSLSKLNTYALQVARRNLQGIKQELDKERENPFLTHDIGISESIASQIVNALLDIISRKGKCDKNSSDKEIDLDQQKGVIEKLLNETKYRKVLQLQIQDTIEGILCDIYEKTLFQNNLSFATPTLKCSIADKHSEENSEMFMEGANKIIPKLSVPKSDVILISNDIVNIVLHNLSSAATLVINAKNPTSARLPLTFCDTFPKIDCQQPLKGSKTERKTERFSYSRNQKSAYADDNQITVVEKEDTQKSATDSCEENANFITKTIFKRLESFATERIDSLITLAFQSKEKSFVIPELENCKQNDSIFYDSSQVESDVNVLKISATETILSQELTDFTFVGRREKLGSTIHLSQARLKTYADVIASAILKLIKNDLDLEIQKIYPYQNNILFQENIIVSEIVDSMLKMLDDKRSVKEICFNSKENSNFSQLALSNEILLGHKEKERSTKQSLFTKYPLEQNQMILENKRQIIVLEEIFMRNGESKNKEKGELLIAVEELLNKLYQRVREVTGHLPPLNETANFISNSKIKTSDTTQKNSFQSHINSVANDIVESVLGKMYLVVVTSLYENNKSRTEVEISDHNDSLLMKPLRFRETKQAGKISNSPRYAISQAYSYVDSQNISVMENTLLPYLPLQVKKDLIQMVLNKITNFVSLPLKVSPKDNPKPCFKAHLKTRSKITTLPKFTKKTHLGLSAAKAKSKTKLGPGEKTLKDSRSKTAIGLSHIMSAGDAKNLLDTKLPTSELKIYAKDIIINILETIVKEFGKVKQTKALPSDQIIAAGKIVNTVLQELYVTNNCNLAYPMKSSHLRLSQGNIGTGSLPKQQACFYLENVSSQLEHIFPREGIFKKLFDKWQTESNDKENEKCKLLMIAENVLTEISIKAKELEYSLSLLNLPPLENCESRFYNHFKGASTRAEDTKAQINMFGREIVEMLLEKLQLCFLSQIPTPDSEETLSNSKEHITAKSKYGFPNKHSLSSLPIYNTKTKDQISVGSSNQIVQEIVETVLNMLESFVDLQFKHISKYEFSEIVKMPIENLSSIQQKLLNKKMLPKLQPLKMFSDKSESNTINFKENIQNILLRVHSFHSQLLTYAVNIISDMLAVIKNKLDNEISQMEPSSISILKENIVASEIIGTLMDQCTYFNESLIQNLSRESLFQGAENAYTVNQVELATNMKMFTSKLKEGSLGINPSQVSKTGFVFCSDEDMKEKYRVSSDLPTSVRSSVEDTVKNSEPTKRPDSETMPSCSTRNKVQDHRPRESNFGSFDQTMKGNSYLPEGSFLQKLLRKASDSTEAALKQVLSFIEMGKGENLRVFHYENLKPVVEPNQIQTTISPLKICLAAENIVNTVLSSCGFPSQPHTNENREIMKPFFISKQSSLSEVSGGQKDNEKSLLRMQDKKINYIPEEENENLEASREDSSFLQKLKKKEYPKIETVKEVEAFTFADHEMGSNEVHLIARHVTTSVVTYLKNFETTVFSEEKMSVSTWSRKKYESKQFLRNIYDDSSIYQCCEHLTESVLYHLTSSISDGTKKGREKEKAWEIQEATFSKIISIHSQVFESRSISIGELALCISEIIIKILFNNKIIQADIAQKMVAIPTKYTYCPGIVSGGFDDLFQDLLVGVIHVLSKEIEVDYHFESNVRNKSFSMHRNNSVPLCNKINRQASPRDWQFSTQQIGQLFQKNKLSYLACKLNSLVGNLKTSESKEVVNKVFNIVSDLFSPDECLDTGMDSGKIQRTYFYSSNNEQPNSILTNNLQLSSKSVFLLNVVCEKLIRILLEECTSTAFPDKGSVSEETSAEECQLLKMLQSVEDGKSDYRKGGMDCECLQVDYMSDLLENVAEIDQDLLTSDSMLTIISHSLVKSLMDKLSHSIQQAPESLPFANKHLNYRTREIQSSFIKARKSELIELGQSKSSLELRSYDSNSLTVSLNNPSVVSSKIQAPFNKHCAVKSSSVSPFERQRTKEMDKVAIHNKLHQEGIYAGVYSATFLEGIISELFFNLSMSLWGKNKNITVSWLNEMNTLFVNNVVNEFNNAQVTVLRNAEERLCFPPVHTETVSKIVDSVYYDVLQQYELKVACGNNPVYDNASIAEQITNGILLEILDYKLPSCFKEHLIPHSYYPLKPEIILQKLQSNLTEFTSLPRSSSDYSTMLSHSFLEDVIRRLLSQLIPPPITCSSLGKKYLMSSDFNEMSTCIINKVMSAISKHKIWFTIYDNQYLYTGKNLQKMVDSVYCNILQMSDSLVSIQKSIVSRSPIMIDQIASFIIQEIIENHLQPFLSGEVLCHPRTPLDPVSTIVTQVLSEVIESHRPQKQSPLDIHLDSFVREIVARLLSKIFSPKHNTEIELKNMTQRIVNSINRHFNKAKIHILYDDKEQAFFSFNTDIVDELATSVYRNALKQHGLDLAVDKESEDSGIFVENITNLIVAAISDYLLHPLFSGDFSASTYSNSVAENIVQDILSNISKSTEPSQSVPLYNTLLPYTFLEDMIRVLLSKLFSSASSLVLNRDTQKDISRVNFNDIASNLVSDIRMKVSQHEIRFSKEEEETKFIYSEDDIQHLVDSVFANVVQTSGSQESAVQNITSSNDILIDRIAGFIIKHICQKHLQPFVSGKSLSSSDTYFDDERRQLFYTSVYSSTFLEDVISGVLRKIFHRVVGIVQTKSIRDSEDELFEKAEELIHLITGEFSKAQVSIIDNTEERLCLPPVERDVVKTIVDMVYSKVLQEYEMEVVPNKDFLNDTKTLAARITNIILAEIFDFQIHPDLIANLPFKSHSKLSANVLIQRVQYDISKSRFQRQASTMYTTMLSHSHLEKIVTQLTSQISPLNTSAEQSDTTKSDLSNTVIKLINEIMSIISKHEICIIKYGNKKQSMISAKDIQSMVDSIYADLSHSNIYQSITKDKKSISDIPVSKIASFIIKEIFNHHIQSFLSEDKTLLLAAVDQTYKLKAIDPKQRELSFIVNSSVFLEEVISELLCKILYAFSHNMLVTENPDRVKLKLTRIVTTLVNSIVLEFTTSEILVADNFDKNLCFSERYKEMVQKIVNSVYGKVLDQYKSLIQIHRVIQSDTICFGRKIYYLLLEEIYDYQVQSLVSGELESSSYSYPQADNIIRNVLNIITKDSHALPPYITVLPHSLLEDMVYRLLGHVFPSTHTENELKEKKFPPDDEFVEAASKLTDEIIKEISEHEIRLSMAEDNAESMQLEPIENLVDSICNNILKTSEFQAEVQKDADKKGCSFLSKLAGFIMKEIMYHHLQPFLHGEESSFSDLSDYDHVSELAKSGKEKTQPSLYSATFLEDIIIDLVHKFCSLLIITEDSKKNEMAELDIMGLALKLANSLIREFKKSDIKVLPNAEKMFSFPPIDKETVDKISNFVYEQFIEKCTSHDIQKGDESNIAIGMIAALTQKAISAFRIQPLFSGDWSSTFFSFLNPDNITQRVQHLPQNTFTQISRCAKENQLSLPDQSYKDTSSTPDCKNMMSTLEINRGTMNRKKSFKTKDTSVKKGDIQNPVLSSINAIMKSGMINLTSGLATGVTNKKEVDENKVGICTQKHSENVSKVTSTTTVKSKDTQEPNLSETFNNNEIEKKRNLIPTDKKGKDDEIYTHFSLIIDDTEYEKEVLGSDSEIGYKKKIDNARESSFKKDDKLFQLSSLKSKRNLGTTTDTLEIRIRTSSNEGRRDSPTQTCRDEEHHSDYEHVQNVIENIFEDVLELSSSPEPAYYSKLSYDQSPPGDNVLNVIQEISRDSAQSVTTKKVSSSTNKNISAKEKEEEEREKEKVREEIKSEPSKPDDPQNQRESKPGIFPAKFLEDVITEMVKQLIFSSIPETQIQDRCQNVSDKQNQAKLYDTAMKLINSLLKEFSDAQIKVFRPDKGNQFPGGKVSSVPKVPPRYKEPTTDEAPSSIKIKSADKMPPMHKMMRKPSSDKIPSIDKTLVNKVVHSSVCNILNDYGSQDSIWKNINSNGENLARRLTSAVINEIFQRQVNLIFCDEVSVSACLPLESKDVVKKVQKLAQTASKECQTSSPYTIILPHKFLENVISALFSKIFSTISSTKTKEPEDNLSTELNFLQMKLVSAVATEISQDKYMTIQYVETLQSDDDEIIQLVVQSVYNNLLPQFGSQEIIQNCVTSGCKILSENIVDLVLREVASNQLQSYFCGELTPHQCVEVENIVEKILKDVFQTTDVPLPKPSHADKLSYNIIEEIAVKFLSKLLSIFPKVHKERTKSLETDMQKITSKVLNSVQEFISKSKIKLVPPTKESPTVPVADNATIENIVNSIYTSVLKHSGSYTSVFKDLMGKSNVLSDTIGFLMVNAISNSEFQPQVEEEVSNSELVLEAVKIMEKVIKIIDELKSKEKSSSRKGLTLDAKLLEEVLALFLAKLIRLPSSSSKDEKNLSKTELNKIASQLSKLVTAEISRSSISLIASDPEEHCLNPENTERIYQVVDSVYSNILQQSGTNKEFYYDIKDTNTAFPKKVASLIIDGVSSFPLDTINSTISNADLSGELDVNRIVQKAQEHAFNVIPELEQEKLDQNLSEEESPIKIVPHVGKKPVKIDPKIISEHLAVISIKTQPLEKLKQECLKRTGHSIAELRRASISGRNYSLGSPDLEKRKTERRTSLDKTGRLDVKPLEAVARNSFQNIRKPDITKVELLKDVQSKNDLIVRLVAHDIDQVYLENYIKEERDSDEDEVVLTQTFAKEEGIKVFEDQVKEVKKPIQSKLSPKSTLSTSSLKKFLSLSKCCQTTASANIESTEAISNQVIESKETHVKRAVAELDMATPKTMPETASSSWEEKPQCKKEEKNLVTEPTHYFIHRIMSSSSYNQEDLISSTGEAEDCHSDPSAKILEESSQEQKPEHGNSVKFITIFERSKDVLGSANPSKEVISETPKPDVSKQGSKMLTKMSSTLSKVFSQCNTNISRSSSPAHQDEH</sequence>
<organism>
    <name type="scientific">Homo sapiens</name>
    <name type="common">Human</name>
    <dbReference type="NCBI Taxonomy" id="9606"/>
    <lineage>
        <taxon>Eukaryota</taxon>
        <taxon>Metazoa</taxon>
        <taxon>Chordata</taxon>
        <taxon>Craniata</taxon>
        <taxon>Vertebrata</taxon>
        <taxon>Euteleostomi</taxon>
        <taxon>Mammalia</taxon>
        <taxon>Eutheria</taxon>
        <taxon>Euarchontoglires</taxon>
        <taxon>Primates</taxon>
        <taxon>Haplorrhini</taxon>
        <taxon>Catarrhini</taxon>
        <taxon>Hominidae</taxon>
        <taxon>Homo</taxon>
    </lineage>
</organism>
<gene>
    <name type="primary">FSIP2</name>
</gene>
<name>FSIP2_HUMAN</name>